<reference key="1">
    <citation type="journal article" date="1994" name="Mol. Microbiol.">
        <title>Multiplicity of genes encoding secreted aspartic proteinases in Candida species.</title>
        <authorList>
            <person name="Monod M."/>
            <person name="Togni G."/>
            <person name="Hube B."/>
            <person name="Sanglard D."/>
        </authorList>
    </citation>
    <scope>NUCLEOTIDE SEQUENCE [GENOMIC DNA]</scope>
    <source>
        <strain>C74</strain>
    </source>
</reference>
<reference key="2">
    <citation type="journal article" date="2005" name="Infect. Immun.">
        <title>Induction of SAP7 correlates with virulence in an intravenous infection model of candidiasis but not in a vaginal infection model in mice.</title>
        <authorList>
            <person name="Taylor B.N."/>
            <person name="Hannemann H."/>
            <person name="Sehnal M."/>
            <person name="Biesemeier A."/>
            <person name="Schweizer A."/>
            <person name="Rollinghoff M."/>
            <person name="Schroppel K."/>
        </authorList>
    </citation>
    <scope>INDUCTION</scope>
</reference>
<reference key="3">
    <citation type="journal article" date="2005" name="Mol. Biol. Cell">
        <title>Global roles of Ssn6 in Tup1- and Nrg1-dependent gene regulation in the fungal pathogen, Candida albicans.</title>
        <authorList>
            <person name="Garcia-Sanchez S."/>
            <person name="Mavor A.L."/>
            <person name="Russell C.L."/>
            <person name="Argimon S."/>
            <person name="Dennison P."/>
            <person name="Enjalbert B."/>
            <person name="Brown A.J."/>
        </authorList>
    </citation>
    <scope>INDUCTION</scope>
</reference>
<reference key="4">
    <citation type="journal article" date="2011" name="J. Biochem.">
        <title>Comprehensive characterization of secreted aspartic proteases encoded by a virulence gene family in Candida albicans.</title>
        <authorList>
            <person name="Aoki W."/>
            <person name="Kitahara N."/>
            <person name="Miura N."/>
            <person name="Morisaka H."/>
            <person name="Yamamoto Y."/>
            <person name="Kuroda K."/>
            <person name="Ueda M."/>
        </authorList>
    </citation>
    <scope>CATALYTIC ACTIVITY</scope>
    <scope>BIOPHYSICOCHEMICAL PROPERTIES</scope>
    <scope>ACTIVITY REGULATION</scope>
</reference>
<reference key="5">
    <citation type="journal article" date="2012" name="PLoS ONE">
        <title>Candida albicans possesses Sap7 as a pepstatin A-insensitive secreted aspartic protease.</title>
        <authorList>
            <person name="Aoki W."/>
            <person name="Kitahara N."/>
            <person name="Miura N."/>
            <person name="Morisaka H."/>
            <person name="Yamamoto Y."/>
            <person name="Kuroda K."/>
            <person name="Ueda M."/>
        </authorList>
    </citation>
    <scope>GLYCOSYLATION</scope>
    <scope>CATALYTIC ACTIVITY</scope>
    <scope>ACTIVE SITE</scope>
    <scope>PROPEPTIDE</scope>
    <scope>MUTAGENESIS OF MET-242; ASP-244; ASP-464 AND THR-467</scope>
    <scope>ACTIVITY REGULATION</scope>
</reference>
<reference key="6">
    <citation type="journal article" date="2016" name="Acta Biochim. Pol.">
        <title>The action of ten secreted aspartic proteases of pathogenic yeast Candida albicans on major human salivary antimicrobial peptide, histatin 5.</title>
        <authorList>
            <person name="Bochenska O."/>
            <person name="Rapala-Kozik M."/>
            <person name="Wolak N."/>
            <person name="Aoki W."/>
            <person name="Ueda M."/>
            <person name="Kozik A."/>
        </authorList>
    </citation>
    <scope>FUNCTION</scope>
    <scope>CATALYTIC ACTIVITY</scope>
    <scope>BIOPHYSICOCHEMICAL PROPERTIES</scope>
</reference>
<keyword id="KW-0064">Aspartyl protease</keyword>
<keyword id="KW-0165">Cleavage on pair of basic residues</keyword>
<keyword id="KW-1015">Disulfide bond</keyword>
<keyword id="KW-0325">Glycoprotein</keyword>
<keyword id="KW-0378">Hydrolase</keyword>
<keyword id="KW-0645">Protease</keyword>
<keyword id="KW-0964">Secreted</keyword>
<keyword id="KW-0732">Signal</keyword>
<keyword id="KW-0843">Virulence</keyword>
<keyword id="KW-0865">Zymogen</keyword>
<comment type="function">
    <text evidence="2">Secreted aspartic peptidases (SAPs) are a group of ten acidic hydrolases considered as key virulence factors (By similarity). These enzymes supply the fungus with nutrient amino acids as well as are able to degrade the selected host's proteins involved in the immune defense (By similarity).</text>
</comment>
<comment type="function">
    <text evidence="12">Plays a key role in defense against host by cleaving histatin-5 (Hst 5), a peptide from human saliva that carries out fungicidal activity (PubMed:27390786). The cleavage rate decreases in an order of SAP2 &gt; SAP9 &gt; SAP3 &gt; SAP7 &gt; SAP4 &gt; SAP1 &gt; SAP8 (PubMed:27390786). The cleavage of Hst 5 by SAP7 results mainly in the appearance of the long DSHAKRHHGYKRKFHEKHHSH peptide which is then slowly proeeded to DSHAKRHHGYKR (PubMed:27390786).</text>
</comment>
<comment type="catalytic activity">
    <reaction evidence="10 11 12">
        <text>Preferential cleavage at the carboxyl of hydrophobic amino acids, but fails to cleave 15-Leu-|-Tyr-16, 16-Tyr-|-Leu-17 and 24-Phe-|-Phe-25 of insulin B chain. Activates trypsinogen, and degrades keratin.</text>
        <dbReference type="EC" id="3.4.23.24"/>
    </reaction>
</comment>
<comment type="activity regulation">
    <text evidence="10 11">Contrary to other SAPs, SAP7 is insensitive to pepstatin A inhibition, which is due restriction of the accessibility of pepstatin A to the active site by Met-242 and Thr-467.</text>
</comment>
<comment type="biophysicochemical properties">
    <phDependence>
        <text evidence="10 12">Optimum pH is 6.0-7.0, the pH of the saliva, for cleavage of both casein-resorufin and Hst 5.</text>
    </phDependence>
</comment>
<comment type="subunit">
    <text evidence="1">Monomer.</text>
</comment>
<comment type="subcellular location">
    <subcellularLocation>
        <location evidence="2">Secreted</location>
    </subcellularLocation>
</comment>
<comment type="induction">
    <text evidence="8 9">Expression is regulated by SSN6 and induced during host infection.</text>
</comment>
<comment type="PTM">
    <text evidence="11">N-glycosylated.</text>
</comment>
<comment type="similarity">
    <text evidence="14">Belongs to the peptidase A1 family.</text>
</comment>
<dbReference type="EC" id="3.4.23.24" evidence="10 11 12"/>
<dbReference type="EMBL" id="Z30193">
    <property type="protein sequence ID" value="CAA82925.1"/>
    <property type="molecule type" value="Genomic_DNA"/>
</dbReference>
<dbReference type="PIR" id="S49058">
    <property type="entry name" value="S42074"/>
</dbReference>
<dbReference type="SMR" id="P43096"/>
<dbReference type="MEROPS" id="A01.065"/>
<dbReference type="GlyCosmos" id="P43096">
    <property type="glycosylation" value="7 sites, No reported glycans"/>
</dbReference>
<dbReference type="VEuPathDB" id="FungiDB:C1_04870W_A"/>
<dbReference type="VEuPathDB" id="FungiDB:CAWG_00909"/>
<dbReference type="GO" id="GO:0005576">
    <property type="term" value="C:extracellular region"/>
    <property type="evidence" value="ECO:0007669"/>
    <property type="project" value="UniProtKB-SubCell"/>
</dbReference>
<dbReference type="GO" id="GO:0009277">
    <property type="term" value="C:fungal-type cell wall"/>
    <property type="evidence" value="ECO:0007669"/>
    <property type="project" value="TreeGrafter"/>
</dbReference>
<dbReference type="GO" id="GO:0004190">
    <property type="term" value="F:aspartic-type endopeptidase activity"/>
    <property type="evidence" value="ECO:0007669"/>
    <property type="project" value="UniProtKB-KW"/>
</dbReference>
<dbReference type="GO" id="GO:0031505">
    <property type="term" value="P:fungal-type cell wall organization"/>
    <property type="evidence" value="ECO:0007669"/>
    <property type="project" value="TreeGrafter"/>
</dbReference>
<dbReference type="GO" id="GO:0006508">
    <property type="term" value="P:proteolysis"/>
    <property type="evidence" value="ECO:0007669"/>
    <property type="project" value="UniProtKB-KW"/>
</dbReference>
<dbReference type="CDD" id="cd05474">
    <property type="entry name" value="SAP_like"/>
    <property type="match status" value="1"/>
</dbReference>
<dbReference type="FunFam" id="2.40.70.10:FF:000011">
    <property type="entry name" value="Aspartic protease"/>
    <property type="match status" value="1"/>
</dbReference>
<dbReference type="Gene3D" id="2.40.70.10">
    <property type="entry name" value="Acid Proteases"/>
    <property type="match status" value="2"/>
</dbReference>
<dbReference type="InterPro" id="IPR001461">
    <property type="entry name" value="Aspartic_peptidase_A1"/>
</dbReference>
<dbReference type="InterPro" id="IPR001969">
    <property type="entry name" value="Aspartic_peptidase_AS"/>
</dbReference>
<dbReference type="InterPro" id="IPR033121">
    <property type="entry name" value="PEPTIDASE_A1"/>
</dbReference>
<dbReference type="InterPro" id="IPR021109">
    <property type="entry name" value="Peptidase_aspartic_dom_sf"/>
</dbReference>
<dbReference type="InterPro" id="IPR033876">
    <property type="entry name" value="SAP-like"/>
</dbReference>
<dbReference type="PANTHER" id="PTHR47965:SF12">
    <property type="entry name" value="ASPARTIC PROTEINASE 3-RELATED"/>
    <property type="match status" value="1"/>
</dbReference>
<dbReference type="PANTHER" id="PTHR47965">
    <property type="entry name" value="ASPARTYL PROTEASE-RELATED"/>
    <property type="match status" value="1"/>
</dbReference>
<dbReference type="Pfam" id="PF00026">
    <property type="entry name" value="Asp"/>
    <property type="match status" value="1"/>
</dbReference>
<dbReference type="PRINTS" id="PR00792">
    <property type="entry name" value="PEPSIN"/>
</dbReference>
<dbReference type="SUPFAM" id="SSF50630">
    <property type="entry name" value="Acid proteases"/>
    <property type="match status" value="1"/>
</dbReference>
<dbReference type="PROSITE" id="PS00141">
    <property type="entry name" value="ASP_PROTEASE"/>
    <property type="match status" value="1"/>
</dbReference>
<dbReference type="PROSITE" id="PS51767">
    <property type="entry name" value="PEPTIDASE_A1"/>
    <property type="match status" value="1"/>
</dbReference>
<accession>P43096</accession>
<name>CARP7_CANAX</name>
<feature type="signal peptide" evidence="4">
    <location>
        <begin position="1"/>
        <end position="16"/>
    </location>
</feature>
<feature type="propeptide" id="PRO_0000025860" description="Activation peptide" evidence="4">
    <location>
        <begin position="17"/>
        <end position="211"/>
    </location>
</feature>
<feature type="chain" id="PRO_0000025861" description="Secreted aspartic protease 7">
    <location>
        <begin position="212"/>
        <end position="588"/>
    </location>
</feature>
<feature type="domain" description="Peptidase A1" evidence="5">
    <location>
        <begin position="226"/>
        <end position="574"/>
    </location>
</feature>
<feature type="region of interest" description="Disordered" evidence="7">
    <location>
        <begin position="83"/>
        <end position="124"/>
    </location>
</feature>
<feature type="region of interest" description="Disordered" evidence="7">
    <location>
        <begin position="144"/>
        <end position="209"/>
    </location>
</feature>
<feature type="compositionally biased region" description="Polar residues" evidence="7">
    <location>
        <begin position="95"/>
        <end position="110"/>
    </location>
</feature>
<feature type="compositionally biased region" description="Polar residues" evidence="7">
    <location>
        <begin position="160"/>
        <end position="179"/>
    </location>
</feature>
<feature type="compositionally biased region" description="Low complexity" evidence="7">
    <location>
        <begin position="180"/>
        <end position="208"/>
    </location>
</feature>
<feature type="active site" evidence="6">
    <location>
        <position position="244"/>
    </location>
</feature>
<feature type="active site" evidence="6">
    <location>
        <position position="464"/>
    </location>
</feature>
<feature type="binding site" evidence="3">
    <location>
        <begin position="244"/>
        <end position="246"/>
    </location>
    <ligand>
        <name>pepstatin A</name>
        <dbReference type="ChEBI" id="CHEBI:190525"/>
        <note>inhibitor</note>
    </ligand>
</feature>
<feature type="binding site" evidence="3">
    <location>
        <begin position="464"/>
        <end position="468"/>
    </location>
    <ligand>
        <name>pepstatin A</name>
        <dbReference type="ChEBI" id="CHEBI:190525"/>
        <note>inhibitor</note>
    </ligand>
</feature>
<feature type="glycosylation site" description="N-linked (GlcNAc...) asparagine" evidence="4">
    <location>
        <position position="150"/>
    </location>
</feature>
<feature type="glycosylation site" description="N-linked (GlcNAc...) asparagine" evidence="4">
    <location>
        <position position="286"/>
    </location>
</feature>
<feature type="glycosylation site" description="N-linked (GlcNAc...) asparagine" evidence="4">
    <location>
        <position position="308"/>
    </location>
</feature>
<feature type="glycosylation site" description="N-linked (GlcNAc...) asparagine" evidence="4">
    <location>
        <position position="327"/>
    </location>
</feature>
<feature type="glycosylation site" description="N-linked (GlcNAc...) asparagine" evidence="4">
    <location>
        <position position="423"/>
    </location>
</feature>
<feature type="glycosylation site" description="N-linked (GlcNAc...) asparagine" evidence="4">
    <location>
        <position position="445"/>
    </location>
</feature>
<feature type="glycosylation site" description="N-linked (GlcNAc...) asparagine" evidence="4">
    <location>
        <position position="486"/>
    </location>
</feature>
<feature type="disulfide bond" evidence="2">
    <location>
        <begin position="260"/>
        <end position="269"/>
    </location>
</feature>
<feature type="disulfide bond" evidence="2">
    <location>
        <begin position="500"/>
        <end position="540"/>
    </location>
</feature>
<proteinExistence type="evidence at protein level"/>
<organism>
    <name type="scientific">Candida albicans</name>
    <name type="common">Yeast</name>
    <dbReference type="NCBI Taxonomy" id="5476"/>
    <lineage>
        <taxon>Eukaryota</taxon>
        <taxon>Fungi</taxon>
        <taxon>Dikarya</taxon>
        <taxon>Ascomycota</taxon>
        <taxon>Saccharomycotina</taxon>
        <taxon>Pichiomycetes</taxon>
        <taxon>Debaryomycetaceae</taxon>
        <taxon>Candida/Lodderomyces clade</taxon>
        <taxon>Candida</taxon>
    </lineage>
</organism>
<protein>
    <recommendedName>
        <fullName evidence="13">Secreted aspartic protease 7</fullName>
        <shortName evidence="14">ACP 7</shortName>
        <shortName evidence="14">Aspartate protease 7</shortName>
        <ecNumber evidence="10 11 12">3.4.23.24</ecNumber>
    </recommendedName>
    <alternativeName>
        <fullName evidence="14">Candidapepsin-7</fullName>
    </alternativeName>
</protein>
<gene>
    <name evidence="13" type="primary">SAP7</name>
</gene>
<evidence type="ECO:0000250" key="1">
    <source>
        <dbReference type="UniProtKB" id="P0CS83"/>
    </source>
</evidence>
<evidence type="ECO:0000250" key="2">
    <source>
        <dbReference type="UniProtKB" id="P0CY27"/>
    </source>
</evidence>
<evidence type="ECO:0000250" key="3">
    <source>
        <dbReference type="UniProtKB" id="P0CY29"/>
    </source>
</evidence>
<evidence type="ECO:0000255" key="4"/>
<evidence type="ECO:0000255" key="5">
    <source>
        <dbReference type="PROSITE-ProRule" id="PRU01103"/>
    </source>
</evidence>
<evidence type="ECO:0000255" key="6">
    <source>
        <dbReference type="PROSITE-ProRule" id="PRU10094"/>
    </source>
</evidence>
<evidence type="ECO:0000256" key="7">
    <source>
        <dbReference type="SAM" id="MobiDB-lite"/>
    </source>
</evidence>
<evidence type="ECO:0000269" key="8">
    <source>
    </source>
</evidence>
<evidence type="ECO:0000269" key="9">
    <source>
    </source>
</evidence>
<evidence type="ECO:0000269" key="10">
    <source>
    </source>
</evidence>
<evidence type="ECO:0000269" key="11">
    <source>
    </source>
</evidence>
<evidence type="ECO:0000269" key="12">
    <source>
    </source>
</evidence>
<evidence type="ECO:0000303" key="13">
    <source>
    </source>
</evidence>
<evidence type="ECO:0000305" key="14"/>
<sequence>MQRVLELLLLSSTALAVIGDGFIALPVHKLQAGEGSAHFPNRLPIFDVVNGVAKSVEDDVNQIIQPIFGNGIFSGGSIQGTHSGNGHSVKYEVSLPSSSAQKGSNGPSSTDNKDTDPSKTGFSLDDLMNSISTDFWNLIGLNKPPTSSDNGSKDADFTPSAVSQVEQPTSKSVESTAPGSASSASSSSSSEAASSSQPSEDSQPSSSANKKTGAFFLSLDNTQTLYTATLKVGSPAQEVQVMIDTGSSDLWFISSGNSQCKVNGGSIDCDKYGVFDKSKSSSWHDNKTDYSISYYDGDKASGTMGQDNITFADGFSIENANFAVIDNTTSSIGVFGVGYPELEAVKSKYTNLPFAMKEQNLIAKVAYSLYLDSRDAVQGYILFGGIDHAFYTGDLKAFDIVQCNDKYVYSQIPLTSVASSLNNYTNAYGLPAGSNHPKVGAVIYNGTDSFNGGVDLKDTLTLLDTGTTYSYLSKDQVESIVGLYGNVTYNDAGKAYEVPCWVGNPGNYLEFNFKNEQYIKVPTSEFVISVGTYASGAELCVFGILPGTHSILGDNFMRSVYAVFDLEDHVISIAQAAYNDNHAVVPIE</sequence>